<gene>
    <name evidence="1" type="primary">rpmF</name>
    <name type="ordered locus">SO_2780</name>
</gene>
<evidence type="ECO:0000255" key="1">
    <source>
        <dbReference type="HAMAP-Rule" id="MF_00340"/>
    </source>
</evidence>
<evidence type="ECO:0000256" key="2">
    <source>
        <dbReference type="SAM" id="MobiDB-lite"/>
    </source>
</evidence>
<evidence type="ECO:0000305" key="3"/>
<keyword id="KW-1185">Reference proteome</keyword>
<keyword id="KW-0687">Ribonucleoprotein</keyword>
<keyword id="KW-0689">Ribosomal protein</keyword>
<accession>Q8EDG9</accession>
<proteinExistence type="inferred from homology"/>
<dbReference type="EMBL" id="AE014299">
    <property type="protein sequence ID" value="AAN55805.1"/>
    <property type="molecule type" value="Genomic_DNA"/>
</dbReference>
<dbReference type="RefSeq" id="NP_718361.1">
    <property type="nucleotide sequence ID" value="NC_004347.2"/>
</dbReference>
<dbReference type="RefSeq" id="WP_011072715.1">
    <property type="nucleotide sequence ID" value="NZ_CP053946.1"/>
</dbReference>
<dbReference type="SMR" id="Q8EDG9"/>
<dbReference type="STRING" id="211586.SO_2780"/>
<dbReference type="PaxDb" id="211586-SO_2780"/>
<dbReference type="GeneID" id="94728508"/>
<dbReference type="KEGG" id="son:SO_2780"/>
<dbReference type="PATRIC" id="fig|211586.12.peg.2680"/>
<dbReference type="eggNOG" id="COG0333">
    <property type="taxonomic scope" value="Bacteria"/>
</dbReference>
<dbReference type="HOGENOM" id="CLU_129084_2_1_6"/>
<dbReference type="OrthoDB" id="9801927at2"/>
<dbReference type="PhylomeDB" id="Q8EDG9"/>
<dbReference type="BioCyc" id="SONE211586:G1GMP-2566-MONOMER"/>
<dbReference type="Proteomes" id="UP000008186">
    <property type="component" value="Chromosome"/>
</dbReference>
<dbReference type="GO" id="GO:0022625">
    <property type="term" value="C:cytosolic large ribosomal subunit"/>
    <property type="evidence" value="ECO:0000318"/>
    <property type="project" value="GO_Central"/>
</dbReference>
<dbReference type="GO" id="GO:0003735">
    <property type="term" value="F:structural constituent of ribosome"/>
    <property type="evidence" value="ECO:0000318"/>
    <property type="project" value="GO_Central"/>
</dbReference>
<dbReference type="GO" id="GO:0006412">
    <property type="term" value="P:translation"/>
    <property type="evidence" value="ECO:0007669"/>
    <property type="project" value="UniProtKB-UniRule"/>
</dbReference>
<dbReference type="HAMAP" id="MF_00340">
    <property type="entry name" value="Ribosomal_bL32"/>
    <property type="match status" value="1"/>
</dbReference>
<dbReference type="InterPro" id="IPR002677">
    <property type="entry name" value="Ribosomal_bL32"/>
</dbReference>
<dbReference type="InterPro" id="IPR044957">
    <property type="entry name" value="Ribosomal_bL32_bact"/>
</dbReference>
<dbReference type="InterPro" id="IPR011332">
    <property type="entry name" value="Ribosomal_zn-bd"/>
</dbReference>
<dbReference type="NCBIfam" id="TIGR01031">
    <property type="entry name" value="rpmF_bact"/>
    <property type="match status" value="1"/>
</dbReference>
<dbReference type="PANTHER" id="PTHR35534">
    <property type="entry name" value="50S RIBOSOMAL PROTEIN L32"/>
    <property type="match status" value="1"/>
</dbReference>
<dbReference type="PANTHER" id="PTHR35534:SF1">
    <property type="entry name" value="LARGE RIBOSOMAL SUBUNIT PROTEIN BL32"/>
    <property type="match status" value="1"/>
</dbReference>
<dbReference type="Pfam" id="PF01783">
    <property type="entry name" value="Ribosomal_L32p"/>
    <property type="match status" value="1"/>
</dbReference>
<dbReference type="SUPFAM" id="SSF57829">
    <property type="entry name" value="Zn-binding ribosomal proteins"/>
    <property type="match status" value="1"/>
</dbReference>
<name>RL32_SHEON</name>
<reference key="1">
    <citation type="journal article" date="2002" name="Nat. Biotechnol.">
        <title>Genome sequence of the dissimilatory metal ion-reducing bacterium Shewanella oneidensis.</title>
        <authorList>
            <person name="Heidelberg J.F."/>
            <person name="Paulsen I.T."/>
            <person name="Nelson K.E."/>
            <person name="Gaidos E.J."/>
            <person name="Nelson W.C."/>
            <person name="Read T.D."/>
            <person name="Eisen J.A."/>
            <person name="Seshadri R."/>
            <person name="Ward N.L."/>
            <person name="Methe B.A."/>
            <person name="Clayton R.A."/>
            <person name="Meyer T."/>
            <person name="Tsapin A."/>
            <person name="Scott J."/>
            <person name="Beanan M.J."/>
            <person name="Brinkac L.M."/>
            <person name="Daugherty S.C."/>
            <person name="DeBoy R.T."/>
            <person name="Dodson R.J."/>
            <person name="Durkin A.S."/>
            <person name="Haft D.H."/>
            <person name="Kolonay J.F."/>
            <person name="Madupu R."/>
            <person name="Peterson J.D."/>
            <person name="Umayam L.A."/>
            <person name="White O."/>
            <person name="Wolf A.M."/>
            <person name="Vamathevan J.J."/>
            <person name="Weidman J.F."/>
            <person name="Impraim M."/>
            <person name="Lee K."/>
            <person name="Berry K.J."/>
            <person name="Lee C."/>
            <person name="Mueller J."/>
            <person name="Khouri H.M."/>
            <person name="Gill J."/>
            <person name="Utterback T.R."/>
            <person name="McDonald L.A."/>
            <person name="Feldblyum T.V."/>
            <person name="Smith H.O."/>
            <person name="Venter J.C."/>
            <person name="Nealson K.H."/>
            <person name="Fraser C.M."/>
        </authorList>
    </citation>
    <scope>NUCLEOTIDE SEQUENCE [LARGE SCALE GENOMIC DNA]</scope>
    <source>
        <strain>ATCC 700550 / JCM 31522 / CIP 106686 / LMG 19005 / NCIMB 14063 / MR-1</strain>
    </source>
</reference>
<feature type="chain" id="PRO_0000172400" description="Large ribosomal subunit protein bL32">
    <location>
        <begin position="1"/>
        <end position="56"/>
    </location>
</feature>
<feature type="region of interest" description="Disordered" evidence="2">
    <location>
        <begin position="1"/>
        <end position="36"/>
    </location>
</feature>
<feature type="compositionally biased region" description="Basic residues" evidence="2">
    <location>
        <begin position="7"/>
        <end position="16"/>
    </location>
</feature>
<feature type="compositionally biased region" description="Polar residues" evidence="2">
    <location>
        <begin position="21"/>
        <end position="31"/>
    </location>
</feature>
<sequence length="56" mass="6285">MAVQQNKKSRSKRGMRRSHDALSTAQLSVDATSGEVHMRHNVTADGFYRGKKVINK</sequence>
<protein>
    <recommendedName>
        <fullName evidence="1">Large ribosomal subunit protein bL32</fullName>
    </recommendedName>
    <alternativeName>
        <fullName evidence="3">50S ribosomal protein L32</fullName>
    </alternativeName>
</protein>
<comment type="similarity">
    <text evidence="1">Belongs to the bacterial ribosomal protein bL32 family.</text>
</comment>
<organism>
    <name type="scientific">Shewanella oneidensis (strain ATCC 700550 / JCM 31522 / CIP 106686 / LMG 19005 / NCIMB 14063 / MR-1)</name>
    <dbReference type="NCBI Taxonomy" id="211586"/>
    <lineage>
        <taxon>Bacteria</taxon>
        <taxon>Pseudomonadati</taxon>
        <taxon>Pseudomonadota</taxon>
        <taxon>Gammaproteobacteria</taxon>
        <taxon>Alteromonadales</taxon>
        <taxon>Shewanellaceae</taxon>
        <taxon>Shewanella</taxon>
    </lineage>
</organism>